<feature type="chain" id="PRO_0000205733" description="Pre-mRNA-splicing factor syf1">
    <location>
        <begin position="1"/>
        <end position="829"/>
    </location>
</feature>
<feature type="repeat" description="HAT 1">
    <location>
        <begin position="15"/>
        <end position="47"/>
    </location>
</feature>
<feature type="repeat" description="HAT 2">
    <location>
        <begin position="49"/>
        <end position="81"/>
    </location>
</feature>
<feature type="repeat" description="HAT 3">
    <location>
        <begin position="93"/>
        <end position="125"/>
    </location>
</feature>
<feature type="repeat" description="HAT 4">
    <location>
        <begin position="127"/>
        <end position="161"/>
    </location>
</feature>
<feature type="repeat" description="HAT 5">
    <location>
        <begin position="163"/>
        <end position="182"/>
    </location>
</feature>
<feature type="repeat" description="HAT 6">
    <location>
        <begin position="277"/>
        <end position="312"/>
    </location>
</feature>
<feature type="repeat" description="HAT 7">
    <location>
        <begin position="380"/>
        <end position="418"/>
    </location>
</feature>
<feature type="repeat" description="HAT 8">
    <location>
        <begin position="420"/>
        <end position="456"/>
    </location>
</feature>
<feature type="repeat" description="HAT 9">
    <location>
        <begin position="473"/>
        <end position="505"/>
    </location>
</feature>
<feature type="repeat" description="HAT 10">
    <location>
        <begin position="544"/>
        <end position="578"/>
    </location>
</feature>
<feature type="repeat" description="HAT 11">
    <location>
        <begin position="581"/>
        <end position="615"/>
    </location>
</feature>
<feature type="repeat" description="HAT 12">
    <location>
        <begin position="689"/>
        <end position="723"/>
    </location>
</feature>
<feature type="region of interest" description="Disordered" evidence="2">
    <location>
        <begin position="799"/>
        <end position="829"/>
    </location>
</feature>
<name>SYF1_NEUCR</name>
<reference key="1">
    <citation type="journal article" date="2003" name="Nucleic Acids Res.">
        <title>What's in the genome of a filamentous fungus? Analysis of the Neurospora genome sequence.</title>
        <authorList>
            <person name="Mannhaupt G."/>
            <person name="Montrone C."/>
            <person name="Haase D."/>
            <person name="Mewes H.-W."/>
            <person name="Aign V."/>
            <person name="Hoheisel J.D."/>
            <person name="Fartmann B."/>
            <person name="Nyakatura G."/>
            <person name="Kempken F."/>
            <person name="Maier J."/>
            <person name="Schulte U."/>
        </authorList>
    </citation>
    <scope>NUCLEOTIDE SEQUENCE [LARGE SCALE GENOMIC DNA]</scope>
    <source>
        <strain>ATCC 24698 / 74-OR23-1A / CBS 708.71 / DSM 1257 / FGSC 987</strain>
    </source>
</reference>
<reference key="2">
    <citation type="journal article" date="2003" name="Nature">
        <title>The genome sequence of the filamentous fungus Neurospora crassa.</title>
        <authorList>
            <person name="Galagan J.E."/>
            <person name="Calvo S.E."/>
            <person name="Borkovich K.A."/>
            <person name="Selker E.U."/>
            <person name="Read N.D."/>
            <person name="Jaffe D.B."/>
            <person name="FitzHugh W."/>
            <person name="Ma L.-J."/>
            <person name="Smirnov S."/>
            <person name="Purcell S."/>
            <person name="Rehman B."/>
            <person name="Elkins T."/>
            <person name="Engels R."/>
            <person name="Wang S."/>
            <person name="Nielsen C.B."/>
            <person name="Butler J."/>
            <person name="Endrizzi M."/>
            <person name="Qui D."/>
            <person name="Ianakiev P."/>
            <person name="Bell-Pedersen D."/>
            <person name="Nelson M.A."/>
            <person name="Werner-Washburne M."/>
            <person name="Selitrennikoff C.P."/>
            <person name="Kinsey J.A."/>
            <person name="Braun E.L."/>
            <person name="Zelter A."/>
            <person name="Schulte U."/>
            <person name="Kothe G.O."/>
            <person name="Jedd G."/>
            <person name="Mewes H.-W."/>
            <person name="Staben C."/>
            <person name="Marcotte E."/>
            <person name="Greenberg D."/>
            <person name="Roy A."/>
            <person name="Foley K."/>
            <person name="Naylor J."/>
            <person name="Stange-Thomann N."/>
            <person name="Barrett R."/>
            <person name="Gnerre S."/>
            <person name="Kamal M."/>
            <person name="Kamvysselis M."/>
            <person name="Mauceli E.W."/>
            <person name="Bielke C."/>
            <person name="Rudd S."/>
            <person name="Frishman D."/>
            <person name="Krystofova S."/>
            <person name="Rasmussen C."/>
            <person name="Metzenberg R.L."/>
            <person name="Perkins D.D."/>
            <person name="Kroken S."/>
            <person name="Cogoni C."/>
            <person name="Macino G."/>
            <person name="Catcheside D.E.A."/>
            <person name="Li W."/>
            <person name="Pratt R.J."/>
            <person name="Osmani S.A."/>
            <person name="DeSouza C.P.C."/>
            <person name="Glass N.L."/>
            <person name="Orbach M.J."/>
            <person name="Berglund J.A."/>
            <person name="Voelker R."/>
            <person name="Yarden O."/>
            <person name="Plamann M."/>
            <person name="Seiler S."/>
            <person name="Dunlap J.C."/>
            <person name="Radford A."/>
            <person name="Aramayo R."/>
            <person name="Natvig D.O."/>
            <person name="Alex L.A."/>
            <person name="Mannhaupt G."/>
            <person name="Ebbole D.J."/>
            <person name="Freitag M."/>
            <person name="Paulsen I."/>
            <person name="Sachs M.S."/>
            <person name="Lander E.S."/>
            <person name="Nusbaum C."/>
            <person name="Birren B.W."/>
        </authorList>
    </citation>
    <scope>NUCLEOTIDE SEQUENCE [LARGE SCALE GENOMIC DNA]</scope>
    <source>
        <strain>ATCC 24698 / 74-OR23-1A / CBS 708.71 / DSM 1257 / FGSC 987</strain>
    </source>
</reference>
<evidence type="ECO:0000250" key="1"/>
<evidence type="ECO:0000256" key="2">
    <source>
        <dbReference type="SAM" id="MobiDB-lite"/>
    </source>
</evidence>
<evidence type="ECO:0000305" key="3"/>
<dbReference type="EMBL" id="BX897675">
    <property type="protein sequence ID" value="CAE85536.1"/>
    <property type="molecule type" value="Genomic_DNA"/>
</dbReference>
<dbReference type="EMBL" id="CM002239">
    <property type="protein sequence ID" value="EAA33470.1"/>
    <property type="molecule type" value="Genomic_DNA"/>
</dbReference>
<dbReference type="RefSeq" id="XP_962706.1">
    <property type="nucleotide sequence ID" value="XM_957613.2"/>
</dbReference>
<dbReference type="SMR" id="Q7SAK5"/>
<dbReference type="FunCoup" id="Q7SAK5">
    <property type="interactions" value="1022"/>
</dbReference>
<dbReference type="STRING" id="367110.Q7SAK5"/>
<dbReference type="PaxDb" id="5141-EFNCRP00000008259"/>
<dbReference type="EnsemblFungi" id="EAA33470">
    <property type="protein sequence ID" value="EAA33470"/>
    <property type="gene ID" value="NCU08036"/>
</dbReference>
<dbReference type="GeneID" id="3878813"/>
<dbReference type="KEGG" id="ncr:NCU08036"/>
<dbReference type="VEuPathDB" id="FungiDB:NCU08036"/>
<dbReference type="HOGENOM" id="CLU_007736_0_0_1"/>
<dbReference type="InParanoid" id="Q7SAK5"/>
<dbReference type="OMA" id="IWYNYLR"/>
<dbReference type="OrthoDB" id="10067343at2759"/>
<dbReference type="Proteomes" id="UP000001805">
    <property type="component" value="Chromosome 4, Linkage Group IV"/>
</dbReference>
<dbReference type="GO" id="GO:0071014">
    <property type="term" value="C:post-mRNA release spliceosomal complex"/>
    <property type="evidence" value="ECO:0000318"/>
    <property type="project" value="GO_Central"/>
</dbReference>
<dbReference type="GO" id="GO:0000974">
    <property type="term" value="C:Prp19 complex"/>
    <property type="evidence" value="ECO:0000318"/>
    <property type="project" value="GO_Central"/>
</dbReference>
<dbReference type="GO" id="GO:0071007">
    <property type="term" value="C:U2-type catalytic step 2 spliceosome"/>
    <property type="evidence" value="ECO:0000318"/>
    <property type="project" value="GO_Central"/>
</dbReference>
<dbReference type="GO" id="GO:0000349">
    <property type="term" value="P:generation of catalytic spliceosome for first transesterification step"/>
    <property type="evidence" value="ECO:0000318"/>
    <property type="project" value="GO_Central"/>
</dbReference>
<dbReference type="GO" id="GO:0000398">
    <property type="term" value="P:mRNA splicing, via spliceosome"/>
    <property type="evidence" value="ECO:0000318"/>
    <property type="project" value="GO_Central"/>
</dbReference>
<dbReference type="FunFam" id="1.25.40.10:FF:000023">
    <property type="entry name" value="Pre-mRNA-splicing factor SYF1"/>
    <property type="match status" value="1"/>
</dbReference>
<dbReference type="FunFam" id="1.25.40.10:FF:000720">
    <property type="entry name" value="Pre-mRNA-splicing factor SYF1"/>
    <property type="match status" value="1"/>
</dbReference>
<dbReference type="FunFam" id="1.25.40.10:FF:000446">
    <property type="entry name" value="Pre-mRNA-splicing factor syf1"/>
    <property type="match status" value="1"/>
</dbReference>
<dbReference type="FunFam" id="1.25.40.10:FF:000038">
    <property type="entry name" value="Putative pre-mRNA-splicing factor SYF1"/>
    <property type="match status" value="1"/>
</dbReference>
<dbReference type="Gene3D" id="1.25.40.10">
    <property type="entry name" value="Tetratricopeptide repeat domain"/>
    <property type="match status" value="5"/>
</dbReference>
<dbReference type="InterPro" id="IPR003107">
    <property type="entry name" value="HAT"/>
</dbReference>
<dbReference type="InterPro" id="IPR055433">
    <property type="entry name" value="HAT_Syf1-like_N"/>
</dbReference>
<dbReference type="InterPro" id="IPR056350">
    <property type="entry name" value="HAT_Syf1_central"/>
</dbReference>
<dbReference type="InterPro" id="IPR055430">
    <property type="entry name" value="HAT_Syf1_CNRKL1_C"/>
</dbReference>
<dbReference type="InterPro" id="IPR045075">
    <property type="entry name" value="Syf1-like"/>
</dbReference>
<dbReference type="InterPro" id="IPR011990">
    <property type="entry name" value="TPR-like_helical_dom_sf"/>
</dbReference>
<dbReference type="PANTHER" id="PTHR11246">
    <property type="entry name" value="PRE-MRNA SPLICING FACTOR"/>
    <property type="match status" value="1"/>
</dbReference>
<dbReference type="PANTHER" id="PTHR11246:SF5">
    <property type="entry name" value="PRE-MRNA-SPLICING FACTOR SYF1"/>
    <property type="match status" value="1"/>
</dbReference>
<dbReference type="Pfam" id="PF23231">
    <property type="entry name" value="HAT_Syf1_CNRKL1_C"/>
    <property type="match status" value="1"/>
</dbReference>
<dbReference type="Pfam" id="PF23233">
    <property type="entry name" value="HAT_Syf1_CNRKL1_N"/>
    <property type="match status" value="1"/>
</dbReference>
<dbReference type="Pfam" id="PF23220">
    <property type="entry name" value="HAT_Syf1_M"/>
    <property type="match status" value="1"/>
</dbReference>
<dbReference type="SMART" id="SM00386">
    <property type="entry name" value="HAT"/>
    <property type="match status" value="11"/>
</dbReference>
<dbReference type="SUPFAM" id="SSF48452">
    <property type="entry name" value="TPR-like"/>
    <property type="match status" value="2"/>
</dbReference>
<organism>
    <name type="scientific">Neurospora crassa (strain ATCC 24698 / 74-OR23-1A / CBS 708.71 / DSM 1257 / FGSC 987)</name>
    <dbReference type="NCBI Taxonomy" id="367110"/>
    <lineage>
        <taxon>Eukaryota</taxon>
        <taxon>Fungi</taxon>
        <taxon>Dikarya</taxon>
        <taxon>Ascomycota</taxon>
        <taxon>Pezizomycotina</taxon>
        <taxon>Sordariomycetes</taxon>
        <taxon>Sordariomycetidae</taxon>
        <taxon>Sordariales</taxon>
        <taxon>Sordariaceae</taxon>
        <taxon>Neurospora</taxon>
    </lineage>
</organism>
<gene>
    <name type="primary">msp-41</name>
    <name type="synonym">syf1</name>
    <name type="ORF">B2E7.050</name>
    <name type="ORF">NCU08036</name>
</gene>
<accession>Q7SAK5</accession>
<keyword id="KW-0507">mRNA processing</keyword>
<keyword id="KW-0508">mRNA splicing</keyword>
<keyword id="KW-0539">Nucleus</keyword>
<keyword id="KW-1185">Reference proteome</keyword>
<keyword id="KW-0677">Repeat</keyword>
<keyword id="KW-0747">Spliceosome</keyword>
<protein>
    <recommendedName>
        <fullName>Pre-mRNA-splicing factor syf1</fullName>
    </recommendedName>
    <alternativeName>
        <fullName>mRNA-splicing protein 41</fullName>
    </alternativeName>
</protein>
<proteinExistence type="inferred from homology"/>
<sequence length="829" mass="96514">MSILSRVSDRRPDLSLVSEEDFPYEQDIVRNPGSTKPWLAYIEYKLQKGTVQEQAYIMERACVQLPRSYKLWKMYLRFRTKHVSKLNAAIFASEYQKVNSLFERALILLNKMPRIWEMYLKFLMQQPLVTHTRRTFDRALRALPITQHNRIWALYRPFANSAEGETAVKIWRRYMQVHPEDAEDFIELLVAVGLYTEAVHKYIEILNNPRFTSKNSKGHYELWSEMVDLLVEHATAVETGHETGIDVERIIRSGIERFADQRGKLWCGLATYWIRRGSFERARDVFEEGITTVMTVRDFTLVFDSYTEFEESIISALMEMASTRAEKGEVDEVADFDLDIRMMRFEHLMDRRPFLLNDVLLRQNPNNVTEWEKRVALWGDNKEEVVKTYLDAIEAIQPKKAVGALHQLWTNYAKFYEAGGDLSSARRIMEKAVKVPYKSVAELADMWIEWAEMELRNECFDEAMKVMAKAVQAPKRSTVDYFDETLSPQQRVHKSWKLWSFYVDLVESVSSLDETRKVYERIFELRIATPQTVVNYANLLEEHKYFEESFKIYERGLDLFSYPVAFELWNLYLTKAVDRKISIERLRDLFEQAVEDCPPKFAKVIYLMYGNLEEERGLARHAMRIYERATRAVADEDRADMFNFYITKSASNFGLPSTRPIYERAIAALPDAEARDMCLKFADMEKRLGEIDRARAIYGHASQFCDPRTNPGFWTKWDQFEVQHGNEDTYKEMLRIKRSVQAQYNTDVNFIASQALARSQQKRMEEEAAGNGGGEMDAEVADAMAQLERQARAPVGFVAASEGPKGGSMPVQPVEVHNPDAIDLDEMDE</sequence>
<comment type="function">
    <text evidence="1">Involved in pre-mRNA splicing and cell cycle progression.</text>
</comment>
<comment type="subunit">
    <text evidence="1">Associated with the spliceosome.</text>
</comment>
<comment type="subcellular location">
    <subcellularLocation>
        <location evidence="1">Nucleus</location>
    </subcellularLocation>
</comment>
<comment type="similarity">
    <text evidence="3">Belongs to the crooked-neck family.</text>
</comment>